<organism>
    <name type="scientific">Yersinia pestis</name>
    <dbReference type="NCBI Taxonomy" id="632"/>
    <lineage>
        <taxon>Bacteria</taxon>
        <taxon>Pseudomonadati</taxon>
        <taxon>Pseudomonadota</taxon>
        <taxon>Gammaproteobacteria</taxon>
        <taxon>Enterobacterales</taxon>
        <taxon>Yersiniaceae</taxon>
        <taxon>Yersinia</taxon>
    </lineage>
</organism>
<keyword id="KW-0998">Cell outer membrane</keyword>
<keyword id="KW-0406">Ion transport</keyword>
<keyword id="KW-0472">Membrane</keyword>
<keyword id="KW-0626">Porin</keyword>
<keyword id="KW-1185">Reference proteome</keyword>
<keyword id="KW-0732">Signal</keyword>
<keyword id="KW-0762">Sugar transport</keyword>
<keyword id="KW-0812">Transmembrane</keyword>
<keyword id="KW-1134">Transmembrane beta strand</keyword>
<keyword id="KW-0813">Transport</keyword>
<proteinExistence type="inferred from homology"/>
<name>LAMB1_YERPE</name>
<protein>
    <recommendedName>
        <fullName evidence="1">Maltoporin 1</fullName>
    </recommendedName>
    <alternativeName>
        <fullName evidence="1">Maltose-inducible porin 1</fullName>
    </alternativeName>
</protein>
<comment type="function">
    <text evidence="1">Involved in the transport of maltose and maltodextrins.</text>
</comment>
<comment type="catalytic activity">
    <reaction evidence="1">
        <text>beta-maltose(in) = beta-maltose(out)</text>
        <dbReference type="Rhea" id="RHEA:29731"/>
        <dbReference type="ChEBI" id="CHEBI:18147"/>
    </reaction>
</comment>
<comment type="subunit">
    <text evidence="1">Homotrimer formed of three 18-stranded antiparallel beta-barrels, containing three independent channels.</text>
</comment>
<comment type="subcellular location">
    <subcellularLocation>
        <location evidence="1">Cell outer membrane</location>
        <topology evidence="1">Multi-pass membrane protein</topology>
    </subcellularLocation>
</comment>
<comment type="induction">
    <text evidence="1 2">By maltose.</text>
</comment>
<comment type="similarity">
    <text evidence="1 2">Belongs to the porin LamB (TC 1.B.3) family.</text>
</comment>
<comment type="sequence caution" evidence="2">
    <conflict type="erroneous initiation">
        <sequence resource="EMBL-CDS" id="AAM83627"/>
    </conflict>
</comment>
<comment type="sequence caution" evidence="2">
    <conflict type="erroneous initiation">
        <sequence resource="EMBL-CDS" id="AAS63244"/>
    </conflict>
</comment>
<reference key="1">
    <citation type="journal article" date="2001" name="Nature">
        <title>Genome sequence of Yersinia pestis, the causative agent of plague.</title>
        <authorList>
            <person name="Parkhill J."/>
            <person name="Wren B.W."/>
            <person name="Thomson N.R."/>
            <person name="Titball R.W."/>
            <person name="Holden M.T.G."/>
            <person name="Prentice M.B."/>
            <person name="Sebaihia M."/>
            <person name="James K.D."/>
            <person name="Churcher C.M."/>
            <person name="Mungall K.L."/>
            <person name="Baker S."/>
            <person name="Basham D."/>
            <person name="Bentley S.D."/>
            <person name="Brooks K."/>
            <person name="Cerdeno-Tarraga A.-M."/>
            <person name="Chillingworth T."/>
            <person name="Cronin A."/>
            <person name="Davies R.M."/>
            <person name="Davis P."/>
            <person name="Dougan G."/>
            <person name="Feltwell T."/>
            <person name="Hamlin N."/>
            <person name="Holroyd S."/>
            <person name="Jagels K."/>
            <person name="Karlyshev A.V."/>
            <person name="Leather S."/>
            <person name="Moule S."/>
            <person name="Oyston P.C.F."/>
            <person name="Quail M.A."/>
            <person name="Rutherford K.M."/>
            <person name="Simmonds M."/>
            <person name="Skelton J."/>
            <person name="Stevens K."/>
            <person name="Whitehead S."/>
            <person name="Barrell B.G."/>
        </authorList>
    </citation>
    <scope>NUCLEOTIDE SEQUENCE [LARGE SCALE GENOMIC DNA]</scope>
    <source>
        <strain>CO-92 / Biovar Orientalis</strain>
    </source>
</reference>
<reference key="2">
    <citation type="journal article" date="2002" name="J. Bacteriol.">
        <title>Genome sequence of Yersinia pestis KIM.</title>
        <authorList>
            <person name="Deng W."/>
            <person name="Burland V."/>
            <person name="Plunkett G. III"/>
            <person name="Boutin A."/>
            <person name="Mayhew G.F."/>
            <person name="Liss P."/>
            <person name="Perna N.T."/>
            <person name="Rose D.J."/>
            <person name="Mau B."/>
            <person name="Zhou S."/>
            <person name="Schwartz D.C."/>
            <person name="Fetherston J.D."/>
            <person name="Lindler L.E."/>
            <person name="Brubaker R.R."/>
            <person name="Plano G.V."/>
            <person name="Straley S.C."/>
            <person name="McDonough K.A."/>
            <person name="Nilles M.L."/>
            <person name="Matson J.S."/>
            <person name="Blattner F.R."/>
            <person name="Perry R.D."/>
        </authorList>
    </citation>
    <scope>NUCLEOTIDE SEQUENCE [LARGE SCALE GENOMIC DNA]</scope>
    <source>
        <strain>KIM10+ / Biovar Mediaevalis</strain>
    </source>
</reference>
<reference key="3">
    <citation type="journal article" date="2004" name="DNA Res.">
        <title>Complete genome sequence of Yersinia pestis strain 91001, an isolate avirulent to humans.</title>
        <authorList>
            <person name="Song Y."/>
            <person name="Tong Z."/>
            <person name="Wang J."/>
            <person name="Wang L."/>
            <person name="Guo Z."/>
            <person name="Han Y."/>
            <person name="Zhang J."/>
            <person name="Pei D."/>
            <person name="Zhou D."/>
            <person name="Qin H."/>
            <person name="Pang X."/>
            <person name="Han Y."/>
            <person name="Zhai J."/>
            <person name="Li M."/>
            <person name="Cui B."/>
            <person name="Qi Z."/>
            <person name="Jin L."/>
            <person name="Dai R."/>
            <person name="Chen F."/>
            <person name="Li S."/>
            <person name="Ye C."/>
            <person name="Du Z."/>
            <person name="Lin W."/>
            <person name="Wang J."/>
            <person name="Yu J."/>
            <person name="Yang H."/>
            <person name="Wang J."/>
            <person name="Huang P."/>
            <person name="Yang R."/>
        </authorList>
    </citation>
    <scope>NUCLEOTIDE SEQUENCE [LARGE SCALE GENOMIC DNA]</scope>
    <source>
        <strain>91001 / Biovar Mediaevalis</strain>
    </source>
</reference>
<gene>
    <name evidence="1" type="primary">lamB1</name>
    <name type="synonym">lamB</name>
    <name type="ordered locus">YPO3711</name>
    <name type="ordered locus">y0032</name>
    <name type="ordered locus">YP_3073</name>
</gene>
<sequence>MITLRKLPIALAVAAGVLSTQAMAVDFHGYARSGIGWTASGGEQQCFQTTGAQSKYRLGNECETYAELKLGQELWKEGDKSFYLDTNVAYSVSQRDDWESTDPAFREANVQGKNLIESLPGSTIWAGKRFYQRHDVHMIDFYYWDISGPGAGLETIDLGFGKLSVAATRNSESGGSSAWIDNQRENAKYTINNVYDVRLAGLETNPGGSLELGVDYGRADTQEGYSLAPNASKDGVMLTAEHTQSLMGGFNKFVVQYATDSMTSYNTGHSQGTSVNNNGHLLRVIDHGAINLAEKWDMMYVALYQDIDLDNNNGNTWYSVGVRPMYKWTPIMSTLLEAGYDNVKSQHTGERNGQYKLTLAQQWQAGDSIWSRPAIRVFATYANWDEKWGYSDTTGVAQDGTIGTNSRGKNNEVTFGAQFEAWW</sequence>
<evidence type="ECO:0000255" key="1">
    <source>
        <dbReference type="HAMAP-Rule" id="MF_01301"/>
    </source>
</evidence>
<evidence type="ECO:0000305" key="2"/>
<feature type="signal peptide" evidence="1">
    <location>
        <begin position="1"/>
        <end position="24"/>
    </location>
</feature>
<feature type="chain" id="PRO_0000025181" description="Maltoporin 1" evidence="1">
    <location>
        <begin position="25"/>
        <end position="423"/>
    </location>
</feature>
<feature type="site" description="Greasy slide, important in sugar transport" evidence="1">
    <location>
        <position position="30"/>
    </location>
</feature>
<feature type="site" description="Greasy slide, important in sugar transport" evidence="1">
    <location>
        <position position="65"/>
    </location>
</feature>
<feature type="site" description="Greasy slide, important in sugar transport" evidence="1">
    <location>
        <position position="98"/>
    </location>
</feature>
<feature type="site" description="Important in sugar transport" evidence="1">
    <location>
        <position position="142"/>
    </location>
</feature>
<feature type="site" description="Greasy slide, important in sugar transport" evidence="1">
    <location>
        <position position="250"/>
    </location>
</feature>
<feature type="site" description="Greasy slide, important in sugar transport" evidence="1">
    <location>
        <position position="370"/>
    </location>
</feature>
<feature type="site" description="Greasy slide, important in sugar transport" evidence="1">
    <location>
        <position position="422"/>
    </location>
</feature>
<dbReference type="EMBL" id="AL590842">
    <property type="protein sequence ID" value="CAL22298.1"/>
    <property type="molecule type" value="Genomic_DNA"/>
</dbReference>
<dbReference type="EMBL" id="AE009952">
    <property type="protein sequence ID" value="AAM83627.1"/>
    <property type="status" value="ALT_INIT"/>
    <property type="molecule type" value="Genomic_DNA"/>
</dbReference>
<dbReference type="EMBL" id="AE017042">
    <property type="protein sequence ID" value="AAS63244.1"/>
    <property type="status" value="ALT_INIT"/>
    <property type="molecule type" value="Genomic_DNA"/>
</dbReference>
<dbReference type="PIR" id="AG0451">
    <property type="entry name" value="AG0451"/>
</dbReference>
<dbReference type="RefSeq" id="WP_002212092.1">
    <property type="nucleotide sequence ID" value="NZ_WUCM01000050.1"/>
</dbReference>
<dbReference type="RefSeq" id="YP_002348592.1">
    <property type="nucleotide sequence ID" value="NC_003143.1"/>
</dbReference>
<dbReference type="SMR" id="Q8ZAS9"/>
<dbReference type="STRING" id="214092.YPO3711"/>
<dbReference type="PaxDb" id="214092-YPO3711"/>
<dbReference type="EnsemblBacteria" id="AAS63244">
    <property type="protein sequence ID" value="AAS63244"/>
    <property type="gene ID" value="YP_3073"/>
</dbReference>
<dbReference type="KEGG" id="ype:YPO3711"/>
<dbReference type="KEGG" id="ypk:y0032"/>
<dbReference type="KEGG" id="ypm:YP_3073"/>
<dbReference type="PATRIC" id="fig|214092.21.peg.4221"/>
<dbReference type="eggNOG" id="COG4580">
    <property type="taxonomic scope" value="Bacteria"/>
</dbReference>
<dbReference type="HOGENOM" id="CLU_032473_4_1_6"/>
<dbReference type="OMA" id="VSQQNDW"/>
<dbReference type="OrthoDB" id="106611at2"/>
<dbReference type="Proteomes" id="UP000000815">
    <property type="component" value="Chromosome"/>
</dbReference>
<dbReference type="Proteomes" id="UP000001019">
    <property type="component" value="Chromosome"/>
</dbReference>
<dbReference type="Proteomes" id="UP000002490">
    <property type="component" value="Chromosome"/>
</dbReference>
<dbReference type="GO" id="GO:0009279">
    <property type="term" value="C:cell outer membrane"/>
    <property type="evidence" value="ECO:0000318"/>
    <property type="project" value="GO_Central"/>
</dbReference>
<dbReference type="GO" id="GO:0046930">
    <property type="term" value="C:pore complex"/>
    <property type="evidence" value="ECO:0007669"/>
    <property type="project" value="UniProtKB-KW"/>
</dbReference>
<dbReference type="GO" id="GO:0015144">
    <property type="term" value="F:carbohydrate transmembrane transporter activity"/>
    <property type="evidence" value="ECO:0000318"/>
    <property type="project" value="GO_Central"/>
</dbReference>
<dbReference type="GO" id="GO:0042958">
    <property type="term" value="F:maltodextrin transmembrane transporter activity"/>
    <property type="evidence" value="ECO:0007669"/>
    <property type="project" value="InterPro"/>
</dbReference>
<dbReference type="GO" id="GO:0015481">
    <property type="term" value="F:maltose transporting porin activity"/>
    <property type="evidence" value="ECO:0007669"/>
    <property type="project" value="InterPro"/>
</dbReference>
<dbReference type="GO" id="GO:0015288">
    <property type="term" value="F:porin activity"/>
    <property type="evidence" value="ECO:0000318"/>
    <property type="project" value="GO_Central"/>
</dbReference>
<dbReference type="GO" id="GO:0006811">
    <property type="term" value="P:monoatomic ion transport"/>
    <property type="evidence" value="ECO:0007669"/>
    <property type="project" value="UniProtKB-KW"/>
</dbReference>
<dbReference type="GO" id="GO:0015774">
    <property type="term" value="P:polysaccharide transport"/>
    <property type="evidence" value="ECO:0000318"/>
    <property type="project" value="GO_Central"/>
</dbReference>
<dbReference type="CDD" id="cd01346">
    <property type="entry name" value="Maltoporin-like"/>
    <property type="match status" value="1"/>
</dbReference>
<dbReference type="FunFam" id="2.40.170.10:FF:000001">
    <property type="entry name" value="Maltoporin"/>
    <property type="match status" value="1"/>
</dbReference>
<dbReference type="Gene3D" id="2.40.170.10">
    <property type="entry name" value="Porin, LamB type"/>
    <property type="match status" value="1"/>
</dbReference>
<dbReference type="HAMAP" id="MF_01301">
    <property type="entry name" value="LamB"/>
    <property type="match status" value="1"/>
</dbReference>
<dbReference type="InterPro" id="IPR050286">
    <property type="entry name" value="G_neg_Bact_CarbUptk_Porin"/>
</dbReference>
<dbReference type="InterPro" id="IPR023738">
    <property type="entry name" value="Maltoporin"/>
</dbReference>
<dbReference type="InterPro" id="IPR003192">
    <property type="entry name" value="Porin_LamB"/>
</dbReference>
<dbReference type="InterPro" id="IPR036998">
    <property type="entry name" value="Porin_LamB_sf"/>
</dbReference>
<dbReference type="NCBIfam" id="NF006860">
    <property type="entry name" value="PRK09360.1"/>
    <property type="match status" value="1"/>
</dbReference>
<dbReference type="PANTHER" id="PTHR38762">
    <property type="entry name" value="CRYPTIC OUTER MEMBRANE PORIN BGLH-RELATED"/>
    <property type="match status" value="1"/>
</dbReference>
<dbReference type="PANTHER" id="PTHR38762:SF1">
    <property type="entry name" value="CRYPTIC OUTER MEMBRANE PORIN BGLH-RELATED"/>
    <property type="match status" value="1"/>
</dbReference>
<dbReference type="Pfam" id="PF02264">
    <property type="entry name" value="LamB"/>
    <property type="match status" value="1"/>
</dbReference>
<dbReference type="SUPFAM" id="SSF56935">
    <property type="entry name" value="Porins"/>
    <property type="match status" value="1"/>
</dbReference>
<accession>Q8ZAS9</accession>
<accession>Q0WAU6</accession>